<keyword id="KW-0067">ATP-binding</keyword>
<keyword id="KW-0963">Cytoplasm</keyword>
<keyword id="KW-0436">Ligase</keyword>
<keyword id="KW-0547">Nucleotide-binding</keyword>
<keyword id="KW-0658">Purine biosynthesis</keyword>
<keyword id="KW-1185">Reference proteome</keyword>
<protein>
    <recommendedName>
        <fullName evidence="1">Phosphoribosylformylglycinamidine cyclo-ligase</fullName>
        <ecNumber evidence="1">6.3.3.1</ecNumber>
    </recommendedName>
    <alternativeName>
        <fullName evidence="1">AIR synthase</fullName>
    </alternativeName>
    <alternativeName>
        <fullName evidence="1">AIRS</fullName>
    </alternativeName>
    <alternativeName>
        <fullName evidence="1">Phosphoribosyl-aminoimidazole synthetase</fullName>
    </alternativeName>
</protein>
<reference key="1">
    <citation type="journal article" date="2004" name="Proc. Natl. Acad. Sci. U.S.A.">
        <title>Structural flexibility in the Burkholderia mallei genome.</title>
        <authorList>
            <person name="Nierman W.C."/>
            <person name="DeShazer D."/>
            <person name="Kim H.S."/>
            <person name="Tettelin H."/>
            <person name="Nelson K.E."/>
            <person name="Feldblyum T.V."/>
            <person name="Ulrich R.L."/>
            <person name="Ronning C.M."/>
            <person name="Brinkac L.M."/>
            <person name="Daugherty S.C."/>
            <person name="Davidsen T.D."/>
            <person name="DeBoy R.T."/>
            <person name="Dimitrov G."/>
            <person name="Dodson R.J."/>
            <person name="Durkin A.S."/>
            <person name="Gwinn M.L."/>
            <person name="Haft D.H."/>
            <person name="Khouri H.M."/>
            <person name="Kolonay J.F."/>
            <person name="Madupu R."/>
            <person name="Mohammoud Y."/>
            <person name="Nelson W.C."/>
            <person name="Radune D."/>
            <person name="Romero C.M."/>
            <person name="Sarria S."/>
            <person name="Selengut J."/>
            <person name="Shamblin C."/>
            <person name="Sullivan S.A."/>
            <person name="White O."/>
            <person name="Yu Y."/>
            <person name="Zafar N."/>
            <person name="Zhou L."/>
            <person name="Fraser C.M."/>
        </authorList>
    </citation>
    <scope>NUCLEOTIDE SEQUENCE [LARGE SCALE GENOMIC DNA]</scope>
    <source>
        <strain>ATCC 23344</strain>
    </source>
</reference>
<evidence type="ECO:0000255" key="1">
    <source>
        <dbReference type="HAMAP-Rule" id="MF_00741"/>
    </source>
</evidence>
<name>PUR5_BURMA</name>
<proteinExistence type="inferred from homology"/>
<dbReference type="EC" id="6.3.3.1" evidence="1"/>
<dbReference type="EMBL" id="CP000010">
    <property type="protein sequence ID" value="AAU49799.1"/>
    <property type="molecule type" value="Genomic_DNA"/>
</dbReference>
<dbReference type="RefSeq" id="WP_004194386.1">
    <property type="nucleotide sequence ID" value="NC_006348.1"/>
</dbReference>
<dbReference type="RefSeq" id="YP_103876.1">
    <property type="nucleotide sequence ID" value="NC_006348.1"/>
</dbReference>
<dbReference type="SMR" id="Q62HE4"/>
<dbReference type="GeneID" id="93061406"/>
<dbReference type="KEGG" id="bma:BMA2317"/>
<dbReference type="PATRIC" id="fig|243160.12.peg.2383"/>
<dbReference type="eggNOG" id="COG0150">
    <property type="taxonomic scope" value="Bacteria"/>
</dbReference>
<dbReference type="HOGENOM" id="CLU_047116_0_0_4"/>
<dbReference type="UniPathway" id="UPA00074">
    <property type="reaction ID" value="UER00129"/>
</dbReference>
<dbReference type="Proteomes" id="UP000006693">
    <property type="component" value="Chromosome 1"/>
</dbReference>
<dbReference type="GO" id="GO:0005829">
    <property type="term" value="C:cytosol"/>
    <property type="evidence" value="ECO:0007669"/>
    <property type="project" value="TreeGrafter"/>
</dbReference>
<dbReference type="GO" id="GO:0005524">
    <property type="term" value="F:ATP binding"/>
    <property type="evidence" value="ECO:0007669"/>
    <property type="project" value="UniProtKB-KW"/>
</dbReference>
<dbReference type="GO" id="GO:0004637">
    <property type="term" value="F:phosphoribosylamine-glycine ligase activity"/>
    <property type="evidence" value="ECO:0007669"/>
    <property type="project" value="TreeGrafter"/>
</dbReference>
<dbReference type="GO" id="GO:0004641">
    <property type="term" value="F:phosphoribosylformylglycinamidine cyclo-ligase activity"/>
    <property type="evidence" value="ECO:0007669"/>
    <property type="project" value="UniProtKB-UniRule"/>
</dbReference>
<dbReference type="GO" id="GO:0006189">
    <property type="term" value="P:'de novo' IMP biosynthetic process"/>
    <property type="evidence" value="ECO:0007669"/>
    <property type="project" value="UniProtKB-UniRule"/>
</dbReference>
<dbReference type="GO" id="GO:0046084">
    <property type="term" value="P:adenine biosynthetic process"/>
    <property type="evidence" value="ECO:0007669"/>
    <property type="project" value="TreeGrafter"/>
</dbReference>
<dbReference type="CDD" id="cd02196">
    <property type="entry name" value="PurM"/>
    <property type="match status" value="1"/>
</dbReference>
<dbReference type="FunFam" id="3.30.1330.10:FF:000001">
    <property type="entry name" value="Phosphoribosylformylglycinamidine cyclo-ligase"/>
    <property type="match status" value="1"/>
</dbReference>
<dbReference type="FunFam" id="3.90.650.10:FF:000001">
    <property type="entry name" value="Phosphoribosylformylglycinamidine cyclo-ligase"/>
    <property type="match status" value="1"/>
</dbReference>
<dbReference type="Gene3D" id="3.90.650.10">
    <property type="entry name" value="PurM-like C-terminal domain"/>
    <property type="match status" value="1"/>
</dbReference>
<dbReference type="Gene3D" id="3.30.1330.10">
    <property type="entry name" value="PurM-like, N-terminal domain"/>
    <property type="match status" value="1"/>
</dbReference>
<dbReference type="HAMAP" id="MF_00741">
    <property type="entry name" value="AIRS"/>
    <property type="match status" value="1"/>
</dbReference>
<dbReference type="InterPro" id="IPR010918">
    <property type="entry name" value="PurM-like_C_dom"/>
</dbReference>
<dbReference type="InterPro" id="IPR036676">
    <property type="entry name" value="PurM-like_C_sf"/>
</dbReference>
<dbReference type="InterPro" id="IPR016188">
    <property type="entry name" value="PurM-like_N"/>
</dbReference>
<dbReference type="InterPro" id="IPR036921">
    <property type="entry name" value="PurM-like_N_sf"/>
</dbReference>
<dbReference type="InterPro" id="IPR004733">
    <property type="entry name" value="PurM_cligase"/>
</dbReference>
<dbReference type="NCBIfam" id="TIGR00878">
    <property type="entry name" value="purM"/>
    <property type="match status" value="1"/>
</dbReference>
<dbReference type="PANTHER" id="PTHR10520:SF12">
    <property type="entry name" value="TRIFUNCTIONAL PURINE BIOSYNTHETIC PROTEIN ADENOSINE-3"/>
    <property type="match status" value="1"/>
</dbReference>
<dbReference type="PANTHER" id="PTHR10520">
    <property type="entry name" value="TRIFUNCTIONAL PURINE BIOSYNTHETIC PROTEIN ADENOSINE-3-RELATED"/>
    <property type="match status" value="1"/>
</dbReference>
<dbReference type="Pfam" id="PF00586">
    <property type="entry name" value="AIRS"/>
    <property type="match status" value="1"/>
</dbReference>
<dbReference type="Pfam" id="PF02769">
    <property type="entry name" value="AIRS_C"/>
    <property type="match status" value="1"/>
</dbReference>
<dbReference type="SUPFAM" id="SSF56042">
    <property type="entry name" value="PurM C-terminal domain-like"/>
    <property type="match status" value="1"/>
</dbReference>
<dbReference type="SUPFAM" id="SSF55326">
    <property type="entry name" value="PurM N-terminal domain-like"/>
    <property type="match status" value="1"/>
</dbReference>
<comment type="catalytic activity">
    <reaction evidence="1">
        <text>2-formamido-N(1)-(5-O-phospho-beta-D-ribosyl)acetamidine + ATP = 5-amino-1-(5-phospho-beta-D-ribosyl)imidazole + ADP + phosphate + H(+)</text>
        <dbReference type="Rhea" id="RHEA:23032"/>
        <dbReference type="ChEBI" id="CHEBI:15378"/>
        <dbReference type="ChEBI" id="CHEBI:30616"/>
        <dbReference type="ChEBI" id="CHEBI:43474"/>
        <dbReference type="ChEBI" id="CHEBI:137981"/>
        <dbReference type="ChEBI" id="CHEBI:147287"/>
        <dbReference type="ChEBI" id="CHEBI:456216"/>
        <dbReference type="EC" id="6.3.3.1"/>
    </reaction>
</comment>
<comment type="pathway">
    <text evidence="1">Purine metabolism; IMP biosynthesis via de novo pathway; 5-amino-1-(5-phospho-D-ribosyl)imidazole from N(2)-formyl-N(1)-(5-phospho-D-ribosyl)glycinamide: step 2/2.</text>
</comment>
<comment type="subcellular location">
    <subcellularLocation>
        <location evidence="1">Cytoplasm</location>
    </subcellularLocation>
</comment>
<comment type="similarity">
    <text evidence="1">Belongs to the AIR synthase family.</text>
</comment>
<accession>Q62HE4</accession>
<sequence>MNPPKSAPDAQGLSYRDAGVDIDAGDALVDKIKPFAKKTLRDGVLGGIGGFGALFEVPKKYREPVLVSGTDGVGTKLKLAFHLNKHDTVGQDLVAMSVNDILVQGAEPLFFLDYFACGKLDVETAATVVKGIATGCELAGCALIGGETAEMPGMYPDGEYDLAGFAVGAVEKSKIIDGSTIAEGDVVLGLASSGIHSNGFSLVRKIIERANPDLSADFHGRSLADALMAPTRIYVKPLLALMEKIAVKGMAHITGGGLVENIPRVLRDGLTAELDQHAWPLPPLFQWLQQHGGVADAEMHRVFNCGIGMAVIVSAADADDALRQLADAGEQVWKIGTVRASREGEAQTVVV</sequence>
<organism>
    <name type="scientific">Burkholderia mallei (strain ATCC 23344)</name>
    <dbReference type="NCBI Taxonomy" id="243160"/>
    <lineage>
        <taxon>Bacteria</taxon>
        <taxon>Pseudomonadati</taxon>
        <taxon>Pseudomonadota</taxon>
        <taxon>Betaproteobacteria</taxon>
        <taxon>Burkholderiales</taxon>
        <taxon>Burkholderiaceae</taxon>
        <taxon>Burkholderia</taxon>
        <taxon>pseudomallei group</taxon>
    </lineage>
</organism>
<gene>
    <name evidence="1" type="primary">purM</name>
    <name type="ordered locus">BMA2317</name>
</gene>
<feature type="chain" id="PRO_0000258339" description="Phosphoribosylformylglycinamidine cyclo-ligase">
    <location>
        <begin position="1"/>
        <end position="351"/>
    </location>
</feature>